<sequence>MSTLSYVSPDALKGWLMESPNEISIIDVRDYDYEGERIPGSVRIPSDTFLASVDQHVDDLMKKRSLIVHCTYSQVRGPKAARVLSEILRNRITESKEKLSLSQKEKLFQNLPTVYILHGGFSAWKRRYGGQQGLIEYD</sequence>
<evidence type="ECO:0000250" key="1"/>
<evidence type="ECO:0000255" key="2">
    <source>
        <dbReference type="PROSITE-ProRule" id="PRU00173"/>
    </source>
</evidence>
<evidence type="ECO:0000269" key="3">
    <source>
    </source>
</evidence>
<evidence type="ECO:0000269" key="4">
    <source>
    </source>
</evidence>
<evidence type="ECO:0000305" key="5"/>
<gene>
    <name type="primary">ibp1</name>
    <name type="ORF">SPBC839.07</name>
</gene>
<reference key="1">
    <citation type="journal article" date="2003" name="Curr. Genet.">
        <title>Ibp1p, a novel Cdc25-related phosphatase, suppresses Schizosaccharomyces pombe hsk1 (cdc7).</title>
        <authorList>
            <person name="Snaith H.A."/>
            <person name="Marlett J."/>
            <person name="Forsburg S.L."/>
        </authorList>
    </citation>
    <scope>NUCLEOTIDE SEQUENCE [MRNA]</scope>
    <scope>FUNCTION</scope>
    <scope>MUTAGENESIS OF CYS-70; SER-73 AND ARG-76</scope>
</reference>
<reference key="2">
    <citation type="journal article" date="2002" name="Nature">
        <title>The genome sequence of Schizosaccharomyces pombe.</title>
        <authorList>
            <person name="Wood V."/>
            <person name="Gwilliam R."/>
            <person name="Rajandream M.A."/>
            <person name="Lyne M.H."/>
            <person name="Lyne R."/>
            <person name="Stewart A."/>
            <person name="Sgouros J.G."/>
            <person name="Peat N."/>
            <person name="Hayles J."/>
            <person name="Baker S.G."/>
            <person name="Basham D."/>
            <person name="Bowman S."/>
            <person name="Brooks K."/>
            <person name="Brown D."/>
            <person name="Brown S."/>
            <person name="Chillingworth T."/>
            <person name="Churcher C.M."/>
            <person name="Collins M."/>
            <person name="Connor R."/>
            <person name="Cronin A."/>
            <person name="Davis P."/>
            <person name="Feltwell T."/>
            <person name="Fraser A."/>
            <person name="Gentles S."/>
            <person name="Goble A."/>
            <person name="Hamlin N."/>
            <person name="Harris D.E."/>
            <person name="Hidalgo J."/>
            <person name="Hodgson G."/>
            <person name="Holroyd S."/>
            <person name="Hornsby T."/>
            <person name="Howarth S."/>
            <person name="Huckle E.J."/>
            <person name="Hunt S."/>
            <person name="Jagels K."/>
            <person name="James K.D."/>
            <person name="Jones L."/>
            <person name="Jones M."/>
            <person name="Leather S."/>
            <person name="McDonald S."/>
            <person name="McLean J."/>
            <person name="Mooney P."/>
            <person name="Moule S."/>
            <person name="Mungall K.L."/>
            <person name="Murphy L.D."/>
            <person name="Niblett D."/>
            <person name="Odell C."/>
            <person name="Oliver K."/>
            <person name="O'Neil S."/>
            <person name="Pearson D."/>
            <person name="Quail M.A."/>
            <person name="Rabbinowitsch E."/>
            <person name="Rutherford K.M."/>
            <person name="Rutter S."/>
            <person name="Saunders D."/>
            <person name="Seeger K."/>
            <person name="Sharp S."/>
            <person name="Skelton J."/>
            <person name="Simmonds M.N."/>
            <person name="Squares R."/>
            <person name="Squares S."/>
            <person name="Stevens K."/>
            <person name="Taylor K."/>
            <person name="Taylor R.G."/>
            <person name="Tivey A."/>
            <person name="Walsh S.V."/>
            <person name="Warren T."/>
            <person name="Whitehead S."/>
            <person name="Woodward J.R."/>
            <person name="Volckaert G."/>
            <person name="Aert R."/>
            <person name="Robben J."/>
            <person name="Grymonprez B."/>
            <person name="Weltjens I."/>
            <person name="Vanstreels E."/>
            <person name="Rieger M."/>
            <person name="Schaefer M."/>
            <person name="Mueller-Auer S."/>
            <person name="Gabel C."/>
            <person name="Fuchs M."/>
            <person name="Duesterhoeft A."/>
            <person name="Fritzc C."/>
            <person name="Holzer E."/>
            <person name="Moestl D."/>
            <person name="Hilbert H."/>
            <person name="Borzym K."/>
            <person name="Langer I."/>
            <person name="Beck A."/>
            <person name="Lehrach H."/>
            <person name="Reinhardt R."/>
            <person name="Pohl T.M."/>
            <person name="Eger P."/>
            <person name="Zimmermann W."/>
            <person name="Wedler H."/>
            <person name="Wambutt R."/>
            <person name="Purnelle B."/>
            <person name="Goffeau A."/>
            <person name="Cadieu E."/>
            <person name="Dreano S."/>
            <person name="Gloux S."/>
            <person name="Lelaure V."/>
            <person name="Mottier S."/>
            <person name="Galibert F."/>
            <person name="Aves S.J."/>
            <person name="Xiang Z."/>
            <person name="Hunt C."/>
            <person name="Moore K."/>
            <person name="Hurst S.M."/>
            <person name="Lucas M."/>
            <person name="Rochet M."/>
            <person name="Gaillardin C."/>
            <person name="Tallada V.A."/>
            <person name="Garzon A."/>
            <person name="Thode G."/>
            <person name="Daga R.R."/>
            <person name="Cruzado L."/>
            <person name="Jimenez J."/>
            <person name="Sanchez M."/>
            <person name="del Rey F."/>
            <person name="Benito J."/>
            <person name="Dominguez A."/>
            <person name="Revuelta J.L."/>
            <person name="Moreno S."/>
            <person name="Armstrong J."/>
            <person name="Forsburg S.L."/>
            <person name="Cerutti L."/>
            <person name="Lowe T."/>
            <person name="McCombie W.R."/>
            <person name="Paulsen I."/>
            <person name="Potashkin J."/>
            <person name="Shpakovski G.V."/>
            <person name="Ussery D."/>
            <person name="Barrell B.G."/>
            <person name="Nurse P."/>
        </authorList>
    </citation>
    <scope>NUCLEOTIDE SEQUENCE [LARGE SCALE GENOMIC DNA]</scope>
    <source>
        <strain>972 / ATCC 24843</strain>
    </source>
</reference>
<reference key="3">
    <citation type="journal article" date="2006" name="Nat. Biotechnol.">
        <title>ORFeome cloning and global analysis of protein localization in the fission yeast Schizosaccharomyces pombe.</title>
        <authorList>
            <person name="Matsuyama A."/>
            <person name="Arai R."/>
            <person name="Yashiroda Y."/>
            <person name="Shirai A."/>
            <person name="Kamata A."/>
            <person name="Sekido S."/>
            <person name="Kobayashi Y."/>
            <person name="Hashimoto A."/>
            <person name="Hamamoto M."/>
            <person name="Hiraoka Y."/>
            <person name="Horinouchi S."/>
            <person name="Yoshida M."/>
        </authorList>
    </citation>
    <scope>SUBCELLULAR LOCATION [LARGE SCALE ANALYSIS]</scope>
</reference>
<keyword id="KW-0131">Cell cycle</keyword>
<keyword id="KW-0132">Cell division</keyword>
<keyword id="KW-0963">Cytoplasm</keyword>
<keyword id="KW-0378">Hydrolase</keyword>
<keyword id="KW-0498">Mitosis</keyword>
<keyword id="KW-0539">Nucleus</keyword>
<keyword id="KW-0904">Protein phosphatase</keyword>
<keyword id="KW-1185">Reference proteome</keyword>
<organism>
    <name type="scientific">Schizosaccharomyces pombe (strain 972 / ATCC 24843)</name>
    <name type="common">Fission yeast</name>
    <dbReference type="NCBI Taxonomy" id="284812"/>
    <lineage>
        <taxon>Eukaryota</taxon>
        <taxon>Fungi</taxon>
        <taxon>Dikarya</taxon>
        <taxon>Ascomycota</taxon>
        <taxon>Taphrinomycotina</taxon>
        <taxon>Schizosaccharomycetes</taxon>
        <taxon>Schizosaccharomycetales</taxon>
        <taxon>Schizosaccharomycetaceae</taxon>
        <taxon>Schizosaccharomyces</taxon>
    </lineage>
</organism>
<comment type="function">
    <text evidence="3">May play a role in DNA replication checkpoint via regulation of hsk1 or may act downstream of hsk1 in an S phase regulatory pathway.</text>
</comment>
<comment type="catalytic activity">
    <reaction>
        <text>O-phospho-L-tyrosyl-[protein] + H2O = L-tyrosyl-[protein] + phosphate</text>
        <dbReference type="Rhea" id="RHEA:10684"/>
        <dbReference type="Rhea" id="RHEA-COMP:10136"/>
        <dbReference type="Rhea" id="RHEA-COMP:20101"/>
        <dbReference type="ChEBI" id="CHEBI:15377"/>
        <dbReference type="ChEBI" id="CHEBI:43474"/>
        <dbReference type="ChEBI" id="CHEBI:46858"/>
        <dbReference type="ChEBI" id="CHEBI:61978"/>
        <dbReference type="EC" id="3.1.3.48"/>
    </reaction>
</comment>
<comment type="subcellular location">
    <subcellularLocation>
        <location evidence="4">Cytoplasm</location>
    </subcellularLocation>
    <subcellularLocation>
        <location evidence="4">Nucleus</location>
    </subcellularLocation>
</comment>
<comment type="similarity">
    <text evidence="5">Belongs to the MPI phosphatase family.</text>
</comment>
<accession>Q8WZK3</accession>
<name>IBP1_SCHPO</name>
<proteinExistence type="evidence at protein level"/>
<feature type="chain" id="PRO_0000256254" description="Dual specificity phosphatase ibp1">
    <location>
        <begin position="1"/>
        <end position="138"/>
    </location>
</feature>
<feature type="domain" description="Rhodanese" evidence="2">
    <location>
        <begin position="19"/>
        <end position="133"/>
    </location>
</feature>
<feature type="active site" description="Phosphocysteine intermediate" evidence="1">
    <location>
        <position position="70"/>
    </location>
</feature>
<feature type="mutagenesis site" description="No catalytic activity." evidence="3">
    <original>C</original>
    <variation>S</variation>
    <location>
        <position position="70"/>
    </location>
</feature>
<feature type="mutagenesis site" description="No catalytic activity." evidence="3">
    <original>S</original>
    <variation>A</variation>
    <location>
        <position position="73"/>
    </location>
</feature>
<feature type="mutagenesis site" description="No catalytic activity." evidence="3">
    <original>R</original>
    <variation>A</variation>
    <location>
        <position position="76"/>
    </location>
</feature>
<dbReference type="EC" id="3.1.3.48"/>
<dbReference type="EMBL" id="CU329671">
    <property type="protein sequence ID" value="CAB46700.1"/>
    <property type="molecule type" value="Genomic_DNA"/>
</dbReference>
<dbReference type="PIR" id="T40714">
    <property type="entry name" value="T40714"/>
</dbReference>
<dbReference type="RefSeq" id="NP_595247.1">
    <property type="nucleotide sequence ID" value="NM_001021153.2"/>
</dbReference>
<dbReference type="SMR" id="Q8WZK3"/>
<dbReference type="BioGRID" id="277728">
    <property type="interactions" value="14"/>
</dbReference>
<dbReference type="FunCoup" id="Q8WZK3">
    <property type="interactions" value="340"/>
</dbReference>
<dbReference type="IntAct" id="Q8WZK3">
    <property type="interactions" value="2"/>
</dbReference>
<dbReference type="STRING" id="284812.Q8WZK3"/>
<dbReference type="iPTMnet" id="Q8WZK3"/>
<dbReference type="PaxDb" id="4896-SPBC839.07.1"/>
<dbReference type="EnsemblFungi" id="SPBC839.07.1">
    <property type="protein sequence ID" value="SPBC839.07.1:pep"/>
    <property type="gene ID" value="SPBC839.07"/>
</dbReference>
<dbReference type="GeneID" id="2541214"/>
<dbReference type="KEGG" id="spo:2541214"/>
<dbReference type="PomBase" id="SPBC839.07">
    <property type="gene designation" value="ibp1"/>
</dbReference>
<dbReference type="VEuPathDB" id="FungiDB:SPBC839.07"/>
<dbReference type="eggNOG" id="KOG3772">
    <property type="taxonomic scope" value="Eukaryota"/>
</dbReference>
<dbReference type="HOGENOM" id="CLU_107716_1_1_1"/>
<dbReference type="InParanoid" id="Q8WZK3"/>
<dbReference type="OMA" id="VHCTYSQ"/>
<dbReference type="PhylomeDB" id="Q8WZK3"/>
<dbReference type="PRO" id="PR:Q8WZK3"/>
<dbReference type="Proteomes" id="UP000002485">
    <property type="component" value="Chromosome II"/>
</dbReference>
<dbReference type="GO" id="GO:0005737">
    <property type="term" value="C:cytoplasm"/>
    <property type="evidence" value="ECO:0000318"/>
    <property type="project" value="GO_Central"/>
</dbReference>
<dbReference type="GO" id="GO:0005829">
    <property type="term" value="C:cytosol"/>
    <property type="evidence" value="ECO:0007005"/>
    <property type="project" value="PomBase"/>
</dbReference>
<dbReference type="GO" id="GO:0005634">
    <property type="term" value="C:nucleus"/>
    <property type="evidence" value="ECO:0007005"/>
    <property type="project" value="PomBase"/>
</dbReference>
<dbReference type="GO" id="GO:0004721">
    <property type="term" value="F:phosphoprotein phosphatase activity"/>
    <property type="evidence" value="ECO:0000314"/>
    <property type="project" value="PomBase"/>
</dbReference>
<dbReference type="GO" id="GO:0004725">
    <property type="term" value="F:protein tyrosine phosphatase activity"/>
    <property type="evidence" value="ECO:0000318"/>
    <property type="project" value="GO_Central"/>
</dbReference>
<dbReference type="GO" id="GO:0051301">
    <property type="term" value="P:cell division"/>
    <property type="evidence" value="ECO:0007669"/>
    <property type="project" value="UniProtKB-KW"/>
</dbReference>
<dbReference type="CDD" id="cd01531">
    <property type="entry name" value="Acr2p"/>
    <property type="match status" value="1"/>
</dbReference>
<dbReference type="Gene3D" id="3.40.250.10">
    <property type="entry name" value="Rhodanese-like domain"/>
    <property type="match status" value="1"/>
</dbReference>
<dbReference type="InterPro" id="IPR001763">
    <property type="entry name" value="Rhodanese-like_dom"/>
</dbReference>
<dbReference type="InterPro" id="IPR036873">
    <property type="entry name" value="Rhodanese-like_dom_sf"/>
</dbReference>
<dbReference type="PANTHER" id="PTHR10828:SF38">
    <property type="entry name" value="ARSENICAL-RESISTANCE PROTEIN 2-RELATED"/>
    <property type="match status" value="1"/>
</dbReference>
<dbReference type="PANTHER" id="PTHR10828">
    <property type="entry name" value="M-PHASE INDUCER PHOSPHATASE DUAL SPECIFICITY PHOSPHATASE CDC25"/>
    <property type="match status" value="1"/>
</dbReference>
<dbReference type="Pfam" id="PF00581">
    <property type="entry name" value="Rhodanese"/>
    <property type="match status" value="1"/>
</dbReference>
<dbReference type="SMART" id="SM00450">
    <property type="entry name" value="RHOD"/>
    <property type="match status" value="1"/>
</dbReference>
<dbReference type="SUPFAM" id="SSF52821">
    <property type="entry name" value="Rhodanese/Cell cycle control phosphatase"/>
    <property type="match status" value="1"/>
</dbReference>
<dbReference type="PROSITE" id="PS50206">
    <property type="entry name" value="RHODANESE_3"/>
    <property type="match status" value="1"/>
</dbReference>
<protein>
    <recommendedName>
        <fullName>Dual specificity phosphatase ibp1</fullName>
        <ecNumber>3.1.3.48</ecNumber>
    </recommendedName>
    <alternativeName>
        <fullName>Cdc25-like phosphatase ibp1</fullName>
    </alternativeName>
    <alternativeName>
        <fullName>Itsy bitsy phosphatase 1</fullName>
    </alternativeName>
</protein>